<reference key="1">
    <citation type="journal article" date="2002" name="Nature">
        <title>Comparison of the genomes of two Xanthomonas pathogens with differing host specificities.</title>
        <authorList>
            <person name="da Silva A.C.R."/>
            <person name="Ferro J.A."/>
            <person name="Reinach F.C."/>
            <person name="Farah C.S."/>
            <person name="Furlan L.R."/>
            <person name="Quaggio R.B."/>
            <person name="Monteiro-Vitorello C.B."/>
            <person name="Van Sluys M.A."/>
            <person name="Almeida N.F. Jr."/>
            <person name="Alves L.M.C."/>
            <person name="do Amaral A.M."/>
            <person name="Bertolini M.C."/>
            <person name="Camargo L.E.A."/>
            <person name="Camarotte G."/>
            <person name="Cannavan F."/>
            <person name="Cardozo J."/>
            <person name="Chambergo F."/>
            <person name="Ciapina L.P."/>
            <person name="Cicarelli R.M.B."/>
            <person name="Coutinho L.L."/>
            <person name="Cursino-Santos J.R."/>
            <person name="El-Dorry H."/>
            <person name="Faria J.B."/>
            <person name="Ferreira A.J.S."/>
            <person name="Ferreira R.C.C."/>
            <person name="Ferro M.I.T."/>
            <person name="Formighieri E.F."/>
            <person name="Franco M.C."/>
            <person name="Greggio C.C."/>
            <person name="Gruber A."/>
            <person name="Katsuyama A.M."/>
            <person name="Kishi L.T."/>
            <person name="Leite R.P."/>
            <person name="Lemos E.G.M."/>
            <person name="Lemos M.V.F."/>
            <person name="Locali E.C."/>
            <person name="Machado M.A."/>
            <person name="Madeira A.M.B.N."/>
            <person name="Martinez-Rossi N.M."/>
            <person name="Martins E.C."/>
            <person name="Meidanis J."/>
            <person name="Menck C.F.M."/>
            <person name="Miyaki C.Y."/>
            <person name="Moon D.H."/>
            <person name="Moreira L.M."/>
            <person name="Novo M.T.M."/>
            <person name="Okura V.K."/>
            <person name="Oliveira M.C."/>
            <person name="Oliveira V.R."/>
            <person name="Pereira H.A."/>
            <person name="Rossi A."/>
            <person name="Sena J.A.D."/>
            <person name="Silva C."/>
            <person name="de Souza R.F."/>
            <person name="Spinola L.A.F."/>
            <person name="Takita M.A."/>
            <person name="Tamura R.E."/>
            <person name="Teixeira E.C."/>
            <person name="Tezza R.I.D."/>
            <person name="Trindade dos Santos M."/>
            <person name="Truffi D."/>
            <person name="Tsai S.M."/>
            <person name="White F.F."/>
            <person name="Setubal J.C."/>
            <person name="Kitajima J.P."/>
        </authorList>
    </citation>
    <scope>NUCLEOTIDE SEQUENCE [LARGE SCALE GENOMIC DNA]</scope>
    <source>
        <strain>306</strain>
    </source>
</reference>
<comment type="function">
    <text evidence="1">Cell wall formation. Catalyzes the addition of L-glutamate to the nucleotide precursor UDP-N-acetylmuramoyl-L-alanine.</text>
</comment>
<comment type="catalytic activity">
    <reaction evidence="1">
        <text>UDP-N-acetyl-alpha-D-muramoyl-L-alanine + L-glutamate + ATP = UDP-N-acetyl-alpha-D-muramoyl-L-alanyl-L-glutamate + ADP + phosphate + H(+)</text>
        <dbReference type="Rhea" id="RHEA:58816"/>
        <dbReference type="ChEBI" id="CHEBI:15378"/>
        <dbReference type="ChEBI" id="CHEBI:29985"/>
        <dbReference type="ChEBI" id="CHEBI:30616"/>
        <dbReference type="ChEBI" id="CHEBI:43474"/>
        <dbReference type="ChEBI" id="CHEBI:83898"/>
        <dbReference type="ChEBI" id="CHEBI:142725"/>
        <dbReference type="ChEBI" id="CHEBI:456216"/>
        <dbReference type="EC" id="6.3.2.53"/>
    </reaction>
</comment>
<comment type="pathway">
    <text evidence="1">Cell wall biogenesis; peptidoglycan biosynthesis.</text>
</comment>
<comment type="subcellular location">
    <subcellularLocation>
        <location evidence="1">Cytoplasm</location>
    </subcellularLocation>
</comment>
<comment type="similarity">
    <text evidence="1">Belongs to the MurCDEF family. MurD2 subfamily.</text>
</comment>
<keyword id="KW-0067">ATP-binding</keyword>
<keyword id="KW-0131">Cell cycle</keyword>
<keyword id="KW-0132">Cell division</keyword>
<keyword id="KW-0133">Cell shape</keyword>
<keyword id="KW-0961">Cell wall biogenesis/degradation</keyword>
<keyword id="KW-0963">Cytoplasm</keyword>
<keyword id="KW-0436">Ligase</keyword>
<keyword id="KW-0547">Nucleotide-binding</keyword>
<keyword id="KW-0573">Peptidoglycan synthesis</keyword>
<evidence type="ECO:0000255" key="1">
    <source>
        <dbReference type="HAMAP-Rule" id="MF_02208"/>
    </source>
</evidence>
<feature type="chain" id="PRO_0000109126" description="UDP-N-acetylmuramoyl-L-alanine--L-glutamate ligase">
    <location>
        <begin position="1"/>
        <end position="468"/>
    </location>
</feature>
<feature type="binding site" evidence="1">
    <location>
        <begin position="122"/>
        <end position="128"/>
    </location>
    <ligand>
        <name>ATP</name>
        <dbReference type="ChEBI" id="CHEBI:30616"/>
    </ligand>
</feature>
<accession>Q8PII9</accession>
<proteinExistence type="inferred from homology"/>
<name>MURD2_XANAC</name>
<dbReference type="EC" id="6.3.2.53" evidence="1"/>
<dbReference type="EMBL" id="AE008923">
    <property type="protein sequence ID" value="AAM37753.1"/>
    <property type="molecule type" value="Genomic_DNA"/>
</dbReference>
<dbReference type="SMR" id="Q8PII9"/>
<dbReference type="KEGG" id="xac:XAC2908"/>
<dbReference type="eggNOG" id="COG0771">
    <property type="taxonomic scope" value="Bacteria"/>
</dbReference>
<dbReference type="HOGENOM" id="CLU_032540_4_1_6"/>
<dbReference type="UniPathway" id="UPA00219"/>
<dbReference type="Proteomes" id="UP000000576">
    <property type="component" value="Chromosome"/>
</dbReference>
<dbReference type="GO" id="GO:0005737">
    <property type="term" value="C:cytoplasm"/>
    <property type="evidence" value="ECO:0007669"/>
    <property type="project" value="UniProtKB-SubCell"/>
</dbReference>
<dbReference type="GO" id="GO:0005524">
    <property type="term" value="F:ATP binding"/>
    <property type="evidence" value="ECO:0007669"/>
    <property type="project" value="UniProtKB-UniRule"/>
</dbReference>
<dbReference type="GO" id="GO:0004326">
    <property type="term" value="F:tetrahydrofolylpolyglutamate synthase activity"/>
    <property type="evidence" value="ECO:0007669"/>
    <property type="project" value="InterPro"/>
</dbReference>
<dbReference type="GO" id="GO:0008764">
    <property type="term" value="F:UDP-N-acetylmuramoylalanine-D-glutamate ligase activity"/>
    <property type="evidence" value="ECO:0007669"/>
    <property type="project" value="InterPro"/>
</dbReference>
<dbReference type="GO" id="GO:0051301">
    <property type="term" value="P:cell division"/>
    <property type="evidence" value="ECO:0007669"/>
    <property type="project" value="UniProtKB-KW"/>
</dbReference>
<dbReference type="GO" id="GO:0071555">
    <property type="term" value="P:cell wall organization"/>
    <property type="evidence" value="ECO:0007669"/>
    <property type="project" value="UniProtKB-KW"/>
</dbReference>
<dbReference type="GO" id="GO:0009252">
    <property type="term" value="P:peptidoglycan biosynthetic process"/>
    <property type="evidence" value="ECO:0007669"/>
    <property type="project" value="UniProtKB-UniRule"/>
</dbReference>
<dbReference type="GO" id="GO:0008360">
    <property type="term" value="P:regulation of cell shape"/>
    <property type="evidence" value="ECO:0007669"/>
    <property type="project" value="UniProtKB-KW"/>
</dbReference>
<dbReference type="Gene3D" id="3.90.190.20">
    <property type="entry name" value="Mur ligase, C-terminal domain"/>
    <property type="match status" value="1"/>
</dbReference>
<dbReference type="Gene3D" id="3.40.1190.10">
    <property type="entry name" value="Mur-like, catalytic domain"/>
    <property type="match status" value="1"/>
</dbReference>
<dbReference type="Gene3D" id="3.40.50.720">
    <property type="entry name" value="NAD(P)-binding Rossmann-like Domain"/>
    <property type="match status" value="1"/>
</dbReference>
<dbReference type="HAMAP" id="MF_00639">
    <property type="entry name" value="MurD"/>
    <property type="match status" value="1"/>
</dbReference>
<dbReference type="HAMAP" id="MF_02208">
    <property type="entry name" value="MurD2_subfam"/>
    <property type="match status" value="1"/>
</dbReference>
<dbReference type="InterPro" id="IPR018109">
    <property type="entry name" value="Folylpolyglutamate_synth_CS"/>
</dbReference>
<dbReference type="InterPro" id="IPR036565">
    <property type="entry name" value="Mur-like_cat_sf"/>
</dbReference>
<dbReference type="InterPro" id="IPR036615">
    <property type="entry name" value="Mur_ligase_C_dom_sf"/>
</dbReference>
<dbReference type="InterPro" id="IPR013221">
    <property type="entry name" value="Mur_ligase_cen"/>
</dbReference>
<dbReference type="InterPro" id="IPR005762">
    <property type="entry name" value="MurD"/>
</dbReference>
<dbReference type="InterPro" id="IPR043687">
    <property type="entry name" value="MurD2"/>
</dbReference>
<dbReference type="NCBIfam" id="TIGR01087">
    <property type="entry name" value="murD"/>
    <property type="match status" value="1"/>
</dbReference>
<dbReference type="PANTHER" id="PTHR43692">
    <property type="entry name" value="UDP-N-ACETYLMURAMOYLALANINE--D-GLUTAMATE LIGASE"/>
    <property type="match status" value="1"/>
</dbReference>
<dbReference type="PANTHER" id="PTHR43692:SF1">
    <property type="entry name" value="UDP-N-ACETYLMURAMOYLALANINE--D-GLUTAMATE LIGASE"/>
    <property type="match status" value="1"/>
</dbReference>
<dbReference type="Pfam" id="PF08245">
    <property type="entry name" value="Mur_ligase_M"/>
    <property type="match status" value="1"/>
</dbReference>
<dbReference type="SUPFAM" id="SSF53623">
    <property type="entry name" value="MurD-like peptide ligases, catalytic domain"/>
    <property type="match status" value="1"/>
</dbReference>
<dbReference type="SUPFAM" id="SSF53244">
    <property type="entry name" value="MurD-like peptide ligases, peptide-binding domain"/>
    <property type="match status" value="1"/>
</dbReference>
<protein>
    <recommendedName>
        <fullName evidence="1">UDP-N-acetylmuramoyl-L-alanine--L-glutamate ligase</fullName>
        <ecNumber evidence="1">6.3.2.53</ecNumber>
    </recommendedName>
    <alternativeName>
        <fullName evidence="1">UDP-N-acetylmuramoyl-L-alanyl-L-glutamate synthetase</fullName>
        <shortName evidence="1">UDP-MurNAc-L-Ala-L-Glu synthetase</shortName>
    </alternativeName>
</protein>
<gene>
    <name evidence="1" type="primary">murD2</name>
    <name type="ordered locus">XAC2908</name>
</gene>
<sequence>MRISQLEGKAVALWGWGREGRAAYRALRARLPTQALTVFCNAEEAREIGALADAALQVETDASAQALGRFEIVVKSPGISPYRAEALAAAAQGTHFIGGTALWFAEHAQADGSVPGVVCITGTKGKSTTTALLAHVLRAAGHRTALVGNIGQPLLEVLAPQPPPAYWAVELSSYQTGDVGRSGARPQLALVLNLFPEHLDWHGDEARYVRDKLSLVTEGRPRIALLNAADPLLAGLQLPDSQVRWFNQPAGWHLRGEVVYRGEQAIFDTADVPLPGEHNRRNLCAVLAAVEALGLDAAALAPAAASFRPLPNRLQLLGSVDGISYVNDSISTTPHASLAALACFARRRVALLVGGHDRGLDWHDFAQQMAQQAPLEIVTMGANGPRIHALLAPLAEAGHFGLHAANDLEHAMGLARNALGEQGGVVLLSPGAPSFGAYSDYVARGRHFAQLAGFDPAAISAIDGLGVH</sequence>
<organism>
    <name type="scientific">Xanthomonas axonopodis pv. citri (strain 306)</name>
    <dbReference type="NCBI Taxonomy" id="190486"/>
    <lineage>
        <taxon>Bacteria</taxon>
        <taxon>Pseudomonadati</taxon>
        <taxon>Pseudomonadota</taxon>
        <taxon>Gammaproteobacteria</taxon>
        <taxon>Lysobacterales</taxon>
        <taxon>Lysobacteraceae</taxon>
        <taxon>Xanthomonas</taxon>
    </lineage>
</organism>